<accession>Q06520</accession>
<sequence>MSDDFLWFEGIAFPTMGFRSETLRKVRDEFVIRDEDVIILTYPKSGTNWLAEILCLMHSKGDAKWIQSVPIWERSPWVESEIGYTALSETESPRLFSSHLPIQLFPKSFFSSKAKVIYLMRNPRDVLVSGYFFWKNMKFIKKPKSWEEYFEWFCQGTVLYGSWFDHIHGWMPMREEKNFLLLSYEELKQDTGRTIEKICQFLGKTLEPEELNLILKNSSFQSMKENKMSNYSLLSVDYVVDKAQLLRKGVSGDWKNHFTVAQAEDFDKLFQEKMADLPRELFPWE</sequence>
<comment type="function">
    <text evidence="1 4 5 6 7 8 9 10 11">Sulfotransferase that utilizes 3'-phospho-5'-adenylyl sulfate (PAPS) as sulfonate donor to catalyze the sulfonation of steroids and bile acids in the liver and adrenal glands. Mediates the sulfation of a wide range of steroids and sterols, including pregnenolone, androsterone, DHEA, bile acids, cholesterol and as well many xenobiotics that contain alcohol and phenol functional groups (PubMed:14573603, PubMed:18042734, PubMed:19589875, PubMed:21187059, PubMed:2268288, PubMed:29671343, PubMed:7678732, PubMed:7854148). Sulfonation increases the water solubility of most compounds, and therefore their renal excretion, but it can also result in bioactivation to form active metabolites. Plays an important role in maintening steroid and lipid homeostasis (PubMed:14573603, PubMed:19589875, PubMed:21187059). Plays a key role in bile acid metabolism (PubMed:2268288). In addition, catalyzes the metabolic activation of potent carcinogenic polycyclic arylmethanols (By similarity).</text>
</comment>
<comment type="catalytic activity">
    <reaction evidence="5 6 7 8 10 11">
        <text>an alcohol + 3'-phosphoadenylyl sulfate = an alkyl sulfate + adenosine 3',5'-bisphosphate + H(+)</text>
        <dbReference type="Rhea" id="RHEA:22552"/>
        <dbReference type="ChEBI" id="CHEBI:15378"/>
        <dbReference type="ChEBI" id="CHEBI:30879"/>
        <dbReference type="ChEBI" id="CHEBI:58339"/>
        <dbReference type="ChEBI" id="CHEBI:58343"/>
        <dbReference type="ChEBI" id="CHEBI:83414"/>
        <dbReference type="EC" id="2.8.2.2"/>
    </reaction>
    <physiologicalReaction direction="left-to-right" evidence="8">
        <dbReference type="Rhea" id="RHEA:22553"/>
    </physiologicalReaction>
</comment>
<comment type="catalytic activity">
    <reaction evidence="6">
        <text>(24S)-hydroxycholesterol + 3'-phosphoadenylyl sulfate = (24S)-hydroxycholesterol 24-sulfate + adenosine 3',5'-bisphosphate + H(+)</text>
        <dbReference type="Rhea" id="RHEA:52344"/>
        <dbReference type="ChEBI" id="CHEBI:15378"/>
        <dbReference type="ChEBI" id="CHEBI:34310"/>
        <dbReference type="ChEBI" id="CHEBI:58339"/>
        <dbReference type="ChEBI" id="CHEBI:58343"/>
        <dbReference type="ChEBI" id="CHEBI:136566"/>
    </reaction>
    <physiologicalReaction direction="left-to-right" evidence="16">
        <dbReference type="Rhea" id="RHEA:52345"/>
    </physiologicalReaction>
</comment>
<comment type="catalytic activity">
    <reaction evidence="6">
        <text>(24S)-hydroxycholesterol + 3'-phosphoadenylyl sulfate = (24S)-hydroxycholesterol 3-sulfate + adenosine 3',5'-bisphosphate + H(+)</text>
        <dbReference type="Rhea" id="RHEA:52348"/>
        <dbReference type="ChEBI" id="CHEBI:15378"/>
        <dbReference type="ChEBI" id="CHEBI:34310"/>
        <dbReference type="ChEBI" id="CHEBI:58339"/>
        <dbReference type="ChEBI" id="CHEBI:58343"/>
        <dbReference type="ChEBI" id="CHEBI:136567"/>
    </reaction>
    <physiologicalReaction direction="left-to-right" evidence="16">
        <dbReference type="Rhea" id="RHEA:52349"/>
    </physiologicalReaction>
</comment>
<comment type="catalytic activity">
    <reaction evidence="6">
        <text>(24S)-hydroxycholesterol 24-sulfate + 3'-phosphoadenylyl sulfate = (24S)-hydroxycholesterol 3,24-disulfate + adenosine 3',5'-bisphosphate + H(+)</text>
        <dbReference type="Rhea" id="RHEA:52352"/>
        <dbReference type="ChEBI" id="CHEBI:15378"/>
        <dbReference type="ChEBI" id="CHEBI:58339"/>
        <dbReference type="ChEBI" id="CHEBI:58343"/>
        <dbReference type="ChEBI" id="CHEBI:136566"/>
        <dbReference type="ChEBI" id="CHEBI:136568"/>
    </reaction>
    <physiologicalReaction direction="left-to-right" evidence="16">
        <dbReference type="Rhea" id="RHEA:52353"/>
    </physiologicalReaction>
</comment>
<comment type="catalytic activity">
    <reaction evidence="4 5 6 7 8 10">
        <text>3beta-hydroxyandrost-5-en-17-one + 3'-phosphoadenylyl sulfate = dehydroepiandrosterone 3-sulfate + adenosine 3',5'-bisphosphate + H(+)</text>
        <dbReference type="Rhea" id="RHEA:51216"/>
        <dbReference type="ChEBI" id="CHEBI:15378"/>
        <dbReference type="ChEBI" id="CHEBI:28689"/>
        <dbReference type="ChEBI" id="CHEBI:57905"/>
        <dbReference type="ChEBI" id="CHEBI:58339"/>
        <dbReference type="ChEBI" id="CHEBI:58343"/>
    </reaction>
    <physiologicalReaction direction="left-to-right" evidence="16">
        <dbReference type="Rhea" id="RHEA:51217"/>
    </physiologicalReaction>
</comment>
<comment type="catalytic activity">
    <reaction evidence="9">
        <text>pregnenolone + 3'-phosphoadenylyl sulfate = pregnenolone sulfate + adenosine 3',5'-bisphosphate + H(+)</text>
        <dbReference type="Rhea" id="RHEA:52356"/>
        <dbReference type="ChEBI" id="CHEBI:15378"/>
        <dbReference type="ChEBI" id="CHEBI:16581"/>
        <dbReference type="ChEBI" id="CHEBI:58339"/>
        <dbReference type="ChEBI" id="CHEBI:58343"/>
        <dbReference type="ChEBI" id="CHEBI:133000"/>
    </reaction>
    <physiologicalReaction direction="left-to-right" evidence="18">
        <dbReference type="Rhea" id="RHEA:52357"/>
    </physiologicalReaction>
</comment>
<comment type="catalytic activity">
    <reaction evidence="4 5">
        <text>androsterone + 3'-phosphoadenylyl sulfate = androsterone 3alpha-sulfate + adenosine 3',5'-bisphosphate + H(+)</text>
        <dbReference type="Rhea" id="RHEA:60644"/>
        <dbReference type="ChEBI" id="CHEBI:15378"/>
        <dbReference type="ChEBI" id="CHEBI:16032"/>
        <dbReference type="ChEBI" id="CHEBI:58339"/>
        <dbReference type="ChEBI" id="CHEBI:58343"/>
        <dbReference type="ChEBI" id="CHEBI:133003"/>
    </reaction>
    <physiologicalReaction direction="left-to-right" evidence="15">
        <dbReference type="Rhea" id="RHEA:60645"/>
    </physiologicalReaction>
</comment>
<comment type="catalytic activity">
    <reaction evidence="8">
        <text>taurolithocholate + 3'-phosphoadenylyl sulfate = taurolithocholate 3-sulfate + adenosine 3',5'-bisphosphate + H(+)</text>
        <dbReference type="Rhea" id="RHEA:14013"/>
        <dbReference type="ChEBI" id="CHEBI:15378"/>
        <dbReference type="ChEBI" id="CHEBI:17179"/>
        <dbReference type="ChEBI" id="CHEBI:58301"/>
        <dbReference type="ChEBI" id="CHEBI:58339"/>
        <dbReference type="ChEBI" id="CHEBI:58343"/>
        <dbReference type="EC" id="2.8.2.14"/>
    </reaction>
    <physiologicalReaction direction="left-to-right" evidence="17">
        <dbReference type="Rhea" id="RHEA:14014"/>
    </physiologicalReaction>
</comment>
<comment type="catalytic activity">
    <reaction evidence="8">
        <text>lithocholate + 3'-phosphoadenylyl sulfate = lithocholate sulfate + adenosine 3',5'-bisphosphate + H(+)</text>
        <dbReference type="Rhea" id="RHEA:51064"/>
        <dbReference type="ChEBI" id="CHEBI:15378"/>
        <dbReference type="ChEBI" id="CHEBI:29744"/>
        <dbReference type="ChEBI" id="CHEBI:58339"/>
        <dbReference type="ChEBI" id="CHEBI:58343"/>
        <dbReference type="ChEBI" id="CHEBI:133940"/>
    </reaction>
    <physiologicalReaction direction="left-to-right" evidence="17">
        <dbReference type="Rhea" id="RHEA:51065"/>
    </physiologicalReaction>
</comment>
<comment type="activity regulation">
    <text evidence="5">Subject to substrate inhibition. Alternate orientations for binding of steroid substrates to SULT2A1 may play a role in substrate inhibition.</text>
</comment>
<comment type="biophysicochemical properties">
    <kinetics>
        <KM evidence="7">0.8 uM for DHEA</KM>
        <KM evidence="4">3.1 uM for DHEA</KM>
        <KM evidence="8">1.6 uM for DHEA</KM>
        <KM evidence="6">0.1 uM for (24S)-hydroxycholesterol 24-sulfate</KM>
        <KM evidence="6">3.7 uM for (24S)-hydroxycholesterol</KM>
        <KM evidence="8">1.5 uM for lithocholic acid</KM>
        <KM evidence="8">4.2 uM for taurolithocholate</KM>
        <KM evidence="4">2.1 uM for 3alpha-hydroxy-5alpha-androstan-17-one,</KM>
        <KM evidence="5">1.4 uM for androsterone</KM>
        <KM evidence="9">24.88 uM for PAPS</KM>
        <Vmax evidence="5">227.0 nmol/min/mg enzyme with DHEA</Vmax>
        <Vmax evidence="9">22.55 nmol/min/mg enzyme with DHEA</Vmax>
        <Vmax evidence="8">54.3 umol/min/mg enzyme with lithocholic acid</Vmax>
        <Vmax evidence="5">203.0 nmol/min/mg enzyme with androsterone as substrate</Vmax>
        <Vmax evidence="7">245.0 nmol/min/mg enzyme with DHEA</Vmax>
    </kinetics>
</comment>
<comment type="subunit">
    <text evidence="2">Homodimer.</text>
</comment>
<comment type="interaction">
    <interactant intactId="EBI-3921363">
        <id>Q06520</id>
    </interactant>
    <interactant intactId="EBI-740897">
        <id>Q9GZT8</id>
        <label>NIF3L1</label>
    </interactant>
    <organismsDiffer>false</organismsDiffer>
    <experiments>3</experiments>
</comment>
<comment type="interaction">
    <interactant intactId="EBI-3921363">
        <id>Q06520</id>
    </interactant>
    <interactant intactId="EBI-518675">
        <id>P40763</id>
        <label>STAT3</label>
    </interactant>
    <organismsDiffer>false</organismsDiffer>
    <experiments>2</experiments>
</comment>
<comment type="interaction">
    <interactant intactId="EBI-3921363">
        <id>Q06520</id>
    </interactant>
    <interactant intactId="EBI-10179062">
        <id>O43704</id>
        <label>SULT1B1</label>
    </interactant>
    <organismsDiffer>false</organismsDiffer>
    <experiments>6</experiments>
</comment>
<comment type="subcellular location">
    <subcellularLocation>
        <location evidence="8">Cytoplasm</location>
    </subcellularLocation>
</comment>
<comment type="tissue specificity">
    <text>Liver, adrenal and at lower level in the kidney. Is present in human fetus in higher level in the adrenal than the liver and the kidney.</text>
</comment>
<comment type="PTM">
    <text>The N-terminus is blocked.</text>
</comment>
<comment type="similarity">
    <text evidence="14">Belongs to the sulfotransferase 1 family.</text>
</comment>
<evidence type="ECO:0000250" key="1">
    <source>
        <dbReference type="UniProtKB" id="P15709"/>
    </source>
</evidence>
<evidence type="ECO:0000269" key="2">
    <source>
    </source>
</evidence>
<evidence type="ECO:0000269" key="3">
    <source>
    </source>
</evidence>
<evidence type="ECO:0000269" key="4">
    <source>
    </source>
</evidence>
<evidence type="ECO:0000269" key="5">
    <source>
    </source>
</evidence>
<evidence type="ECO:0000269" key="6">
    <source>
    </source>
</evidence>
<evidence type="ECO:0000269" key="7">
    <source>
    </source>
</evidence>
<evidence type="ECO:0000269" key="8">
    <source>
    </source>
</evidence>
<evidence type="ECO:0000269" key="9">
    <source>
    </source>
</evidence>
<evidence type="ECO:0000269" key="10">
    <source>
    </source>
</evidence>
<evidence type="ECO:0000269" key="11">
    <source>
    </source>
</evidence>
<evidence type="ECO:0000303" key="12">
    <source>
    </source>
</evidence>
<evidence type="ECO:0000303" key="13">
    <source>
    </source>
</evidence>
<evidence type="ECO:0000305" key="14"/>
<evidence type="ECO:0000305" key="15">
    <source>
    </source>
</evidence>
<evidence type="ECO:0000305" key="16">
    <source>
    </source>
</evidence>
<evidence type="ECO:0000305" key="17">
    <source>
    </source>
</evidence>
<evidence type="ECO:0000305" key="18">
    <source>
    </source>
</evidence>
<evidence type="ECO:0007744" key="19">
    <source>
        <dbReference type="PDB" id="1EFH"/>
    </source>
</evidence>
<evidence type="ECO:0007744" key="20">
    <source>
        <dbReference type="PDB" id="1J99"/>
    </source>
</evidence>
<evidence type="ECO:0007744" key="21">
    <source>
        <dbReference type="PDB" id="1OV4"/>
    </source>
</evidence>
<evidence type="ECO:0007744" key="22">
    <source>
        <dbReference type="PDB" id="2QP3"/>
    </source>
</evidence>
<evidence type="ECO:0007744" key="23">
    <source>
        <dbReference type="PDB" id="2QP4"/>
    </source>
</evidence>
<evidence type="ECO:0007744" key="24">
    <source>
        <dbReference type="PDB" id="3F3Y"/>
    </source>
</evidence>
<evidence type="ECO:0007744" key="25">
    <source>
        <dbReference type="PDB" id="4IFB"/>
    </source>
</evidence>
<evidence type="ECO:0007744" key="26">
    <source>
    </source>
</evidence>
<evidence type="ECO:0007829" key="27">
    <source>
        <dbReference type="PDB" id="1EFH"/>
    </source>
</evidence>
<evidence type="ECO:0007829" key="28">
    <source>
        <dbReference type="PDB" id="1J99"/>
    </source>
</evidence>
<evidence type="ECO:0007829" key="29">
    <source>
        <dbReference type="PDB" id="2QP4"/>
    </source>
</evidence>
<evidence type="ECO:0007829" key="30">
    <source>
        <dbReference type="PDB" id="3F3Y"/>
    </source>
</evidence>
<keyword id="KW-0002">3D-structure</keyword>
<keyword id="KW-0088">Bile acid catabolism</keyword>
<keyword id="KW-0963">Cytoplasm</keyword>
<keyword id="KW-0903">Direct protein sequencing</keyword>
<keyword id="KW-0442">Lipid degradation</keyword>
<keyword id="KW-0443">Lipid metabolism</keyword>
<keyword id="KW-0597">Phosphoprotein</keyword>
<keyword id="KW-1267">Proteomics identification</keyword>
<keyword id="KW-1185">Reference proteome</keyword>
<keyword id="KW-0753">Steroid metabolism</keyword>
<keyword id="KW-0808">Transferase</keyword>
<organism>
    <name type="scientific">Homo sapiens</name>
    <name type="common">Human</name>
    <dbReference type="NCBI Taxonomy" id="9606"/>
    <lineage>
        <taxon>Eukaryota</taxon>
        <taxon>Metazoa</taxon>
        <taxon>Chordata</taxon>
        <taxon>Craniata</taxon>
        <taxon>Vertebrata</taxon>
        <taxon>Euteleostomi</taxon>
        <taxon>Mammalia</taxon>
        <taxon>Eutheria</taxon>
        <taxon>Euarchontoglires</taxon>
        <taxon>Primates</taxon>
        <taxon>Haplorrhini</taxon>
        <taxon>Catarrhini</taxon>
        <taxon>Hominidae</taxon>
        <taxon>Homo</taxon>
    </lineage>
</organism>
<gene>
    <name type="primary">SULT2A1</name>
    <name type="synonym">HST</name>
    <name type="synonym">STD</name>
</gene>
<proteinExistence type="evidence at protein level"/>
<feature type="chain" id="PRO_0000085141" description="Sulfotransferase 2A1">
    <location>
        <begin position="1"/>
        <end position="285"/>
    </location>
</feature>
<feature type="active site" description="Proton acceptor" evidence="3 4 20 21">
    <location>
        <position position="99"/>
    </location>
</feature>
<feature type="binding site" evidence="2 4 19 21 24 25">
    <location>
        <position position="44"/>
    </location>
    <ligand>
        <name>3'-phosphoadenylyl sulfate</name>
        <dbReference type="ChEBI" id="CHEBI:58339"/>
    </ligand>
</feature>
<feature type="binding site" evidence="2 19 24 25">
    <location>
        <position position="45"/>
    </location>
    <ligand>
        <name>3'-phosphoadenylyl sulfate</name>
        <dbReference type="ChEBI" id="CHEBI:58339"/>
    </ligand>
</feature>
<feature type="binding site" evidence="2 4 19 21 24 25">
    <location>
        <position position="46"/>
    </location>
    <ligand>
        <name>3'-phosphoadenylyl sulfate</name>
        <dbReference type="ChEBI" id="CHEBI:58339"/>
    </ligand>
</feature>
<feature type="binding site" evidence="2 19 24 25">
    <location>
        <position position="47"/>
    </location>
    <ligand>
        <name>3'-phosphoadenylyl sulfate</name>
        <dbReference type="ChEBI" id="CHEBI:58339"/>
    </ligand>
</feature>
<feature type="binding site" evidence="2 4 19 21 24 25">
    <location>
        <position position="48"/>
    </location>
    <ligand>
        <name>3'-phosphoadenylyl sulfate</name>
        <dbReference type="ChEBI" id="CHEBI:58339"/>
    </ligand>
</feature>
<feature type="binding site" evidence="2 19 24 25">
    <location>
        <position position="49"/>
    </location>
    <ligand>
        <name>3'-phosphoadenylyl sulfate</name>
        <dbReference type="ChEBI" id="CHEBI:58339"/>
    </ligand>
</feature>
<feature type="binding site" evidence="2 19 24 25">
    <location>
        <position position="121"/>
    </location>
    <ligand>
        <name>3'-phosphoadenylyl sulfate</name>
        <dbReference type="ChEBI" id="CHEBI:58339"/>
    </ligand>
</feature>
<feature type="binding site" evidence="2 19 24 25">
    <location>
        <position position="129"/>
    </location>
    <ligand>
        <name>3'-phosphoadenylyl sulfate</name>
        <dbReference type="ChEBI" id="CHEBI:58339"/>
    </ligand>
</feature>
<feature type="binding site" evidence="2 25">
    <location>
        <position position="184"/>
    </location>
    <ligand>
        <name>3'-phosphoadenylyl sulfate</name>
        <dbReference type="ChEBI" id="CHEBI:58339"/>
    </ligand>
</feature>
<feature type="binding site" evidence="2 19 24 25">
    <location>
        <position position="218"/>
    </location>
    <ligand>
        <name>3'-phosphoadenylyl sulfate</name>
        <dbReference type="ChEBI" id="CHEBI:58339"/>
    </ligand>
</feature>
<feature type="binding site" evidence="2 19 25">
    <location>
        <position position="223"/>
    </location>
    <ligand>
        <name>3'-phosphoadenylyl sulfate</name>
        <dbReference type="ChEBI" id="CHEBI:58339"/>
    </ligand>
</feature>
<feature type="binding site" evidence="2 19 24 25">
    <location>
        <position position="247"/>
    </location>
    <ligand>
        <name>3'-phosphoadenylyl sulfate</name>
        <dbReference type="ChEBI" id="CHEBI:58339"/>
    </ligand>
</feature>
<feature type="binding site" evidence="2 19 24 25">
    <location>
        <position position="248"/>
    </location>
    <ligand>
        <name>3'-phosphoadenylyl sulfate</name>
        <dbReference type="ChEBI" id="CHEBI:58339"/>
    </ligand>
</feature>
<feature type="binding site" evidence="2 19 24 25">
    <location>
        <position position="249"/>
    </location>
    <ligand>
        <name>3'-phosphoadenylyl sulfate</name>
        <dbReference type="ChEBI" id="CHEBI:58339"/>
    </ligand>
</feature>
<feature type="modified residue" description="Phosphoserine" evidence="26">
    <location>
        <position position="251"/>
    </location>
</feature>
<feature type="sequence variant" id="VAR_083881" description="Sulfating activity toward both DHEA and pregnenolone is completely abolished; dbSNP:rs772897551." evidence="9">
    <original>K</original>
    <variation>E</variation>
    <location>
        <position position="44"/>
    </location>
</feature>
<feature type="sequence variant" id="VAR_052520" description="In dbSNP:rs11569681." evidence="10">
    <original>A</original>
    <variation>P</variation>
    <location>
        <position position="63"/>
    </location>
</feature>
<feature type="sequence variant" id="VAR_083882" description="Decreases of the sulfotransferase activity toward DHEA; decreases of the sulfotransferase activity toward pregnenolone; dbSNP:rs775030275." evidence="9">
    <original>P</original>
    <variation>T</variation>
    <location>
        <position position="76"/>
    </location>
</feature>
<feature type="sequence variant" id="VAR_083883" description="Decreases of the sulfotransferase activity toward DHEA; no effect on the sulfotransferase activity toward pregnenolone; dbSNP:rs751309613." evidence="9">
    <original>E</original>
    <variation>K</variation>
    <location>
        <position position="147"/>
    </location>
</feature>
<feature type="sequence variant" id="VAR_083884" description="Decreases of the sulfotransferase activity toward DHEA; decreases of the sulfotransferase activity toward pregnenolone; dbSNP:rs368067020." evidence="9">
    <original>E</original>
    <variation>K</variation>
    <location>
        <position position="148"/>
    </location>
</feature>
<feature type="sequence variant" id="VAR_083885" description="Decreases of the sulfotransferase activity toward DHEA; decreases of the sulfotransferase activity toward pregnenolone; dbSNP:rs757338859." evidence="9">
    <original>L</original>
    <variation>P</variation>
    <location>
        <position position="246"/>
    </location>
</feature>
<feature type="sequence variant" id="VAR_083886" description="Decreases of the sulfotransferase activity toward DHEA; decreases of the sulfotransferase activity toward pregnenolone; dbSNP:rs746239667 and dbSNP:rs779218418." evidence="9">
    <original>F</original>
    <variation>L</variation>
    <location>
        <position position="258"/>
    </location>
</feature>
<feature type="sequence variant" id="VAR_052521" description="In dbSNP:rs11569679.">
    <original>A</original>
    <variation>T</variation>
    <location>
        <position position="261"/>
    </location>
</feature>
<feature type="sequence variant" id="VAR_083887" description="Decreases of the sulfotransferase activity toward DHEA; no effect on the sulfotransferase activity toward pregnenolone; dbSNP:rs753928755." evidence="9">
    <original>Q</original>
    <variation>E</variation>
    <location>
        <position position="262"/>
    </location>
</feature>
<feature type="mutagenesis site" description="Strongly reduces substrate inhibition when ADT or DHEA are used as substrates." evidence="5">
    <original>M</original>
    <variation>I</variation>
    <location>
        <position position="137"/>
    </location>
</feature>
<feature type="mutagenesis site" description="Substrate inhibition is completely eliminated for DHEA; when associated with A-238." evidence="5">
    <original>M</original>
    <variation>W</variation>
    <location>
        <position position="137"/>
    </location>
</feature>
<feature type="mutagenesis site" description="Completely eliminates the substrate inhibition when ADT is used as substrate. Partially eliminates substrate inhibition when DHEA is used as substrate. Completely eliminates the substrate inhibition for DHEA, when associated with I-137." evidence="5">
    <original>Y</original>
    <variation>A</variation>
    <location>
        <position position="238"/>
    </location>
</feature>
<feature type="mutagenesis site" description="Strongly reduces substrate inhibition when ADT or DHEA are used as substrates." evidence="5">
    <original>Y</original>
    <variation>F</variation>
    <location>
        <position position="238"/>
    </location>
</feature>
<feature type="mutagenesis site" description="Strongly reduces substrate inhibition when ADT or DHEA are used as substrates." evidence="5">
    <original>Y</original>
    <variation>W</variation>
    <location>
        <position position="238"/>
    </location>
</feature>
<feature type="sequence conflict" description="In Ref. 1; AAA35758/CAA49755." evidence="14" ref="1">
    <original>T</original>
    <variation>S</variation>
    <location>
        <position position="90"/>
    </location>
</feature>
<feature type="sequence conflict" description="In Ref. 1; AA sequence." evidence="14" ref="1">
    <original>L</original>
    <variation>D</variation>
    <location>
        <position position="119"/>
    </location>
</feature>
<feature type="sequence conflict" description="In Ref. 6; AAB23169." evidence="14" ref="6">
    <original>L</original>
    <variation>V</variation>
    <location>
        <position position="159"/>
    </location>
</feature>
<feature type="strand" evidence="28">
    <location>
        <begin position="4"/>
        <end position="8"/>
    </location>
</feature>
<feature type="strand" evidence="28">
    <location>
        <begin position="11"/>
        <end position="13"/>
    </location>
</feature>
<feature type="strand" evidence="28">
    <location>
        <begin position="15"/>
        <end position="17"/>
    </location>
</feature>
<feature type="helix" evidence="28">
    <location>
        <begin position="20"/>
        <end position="28"/>
    </location>
</feature>
<feature type="strand" evidence="28">
    <location>
        <begin position="37"/>
        <end position="40"/>
    </location>
</feature>
<feature type="strand" evidence="29">
    <location>
        <begin position="43"/>
        <end position="46"/>
    </location>
</feature>
<feature type="helix" evidence="28">
    <location>
        <begin position="47"/>
        <end position="58"/>
    </location>
</feature>
<feature type="turn" evidence="28">
    <location>
        <begin position="59"/>
        <end position="61"/>
    </location>
</feature>
<feature type="helix" evidence="28">
    <location>
        <begin position="64"/>
        <end position="68"/>
    </location>
</feature>
<feature type="helix" evidence="28">
    <location>
        <begin position="71"/>
        <end position="74"/>
    </location>
</feature>
<feature type="helix" evidence="28">
    <location>
        <begin position="81"/>
        <end position="87"/>
    </location>
</feature>
<feature type="strand" evidence="28">
    <location>
        <begin position="95"/>
        <end position="98"/>
    </location>
</feature>
<feature type="helix" evidence="28">
    <location>
        <begin position="102"/>
        <end position="104"/>
    </location>
</feature>
<feature type="helix" evidence="28">
    <location>
        <begin position="107"/>
        <end position="111"/>
    </location>
</feature>
<feature type="strand" evidence="28">
    <location>
        <begin position="115"/>
        <end position="120"/>
    </location>
</feature>
<feature type="helix" evidence="28">
    <location>
        <begin position="123"/>
        <end position="134"/>
    </location>
</feature>
<feature type="strand" evidence="27">
    <location>
        <begin position="137"/>
        <end position="140"/>
    </location>
</feature>
<feature type="helix" evidence="28">
    <location>
        <begin position="146"/>
        <end position="155"/>
    </location>
</feature>
<feature type="helix" evidence="28">
    <location>
        <begin position="163"/>
        <end position="170"/>
    </location>
</feature>
<feature type="helix" evidence="28">
    <location>
        <begin position="171"/>
        <end position="173"/>
    </location>
</feature>
<feature type="strand" evidence="28">
    <location>
        <begin position="179"/>
        <end position="183"/>
    </location>
</feature>
<feature type="helix" evidence="28">
    <location>
        <begin position="184"/>
        <end position="189"/>
    </location>
</feature>
<feature type="helix" evidence="28">
    <location>
        <begin position="191"/>
        <end position="202"/>
    </location>
</feature>
<feature type="helix" evidence="28">
    <location>
        <begin position="208"/>
        <end position="217"/>
    </location>
</feature>
<feature type="helix" evidence="28">
    <location>
        <begin position="220"/>
        <end position="224"/>
    </location>
</feature>
<feature type="turn" evidence="28">
    <location>
        <begin position="227"/>
        <end position="229"/>
    </location>
</feature>
<feature type="turn" evidence="28">
    <location>
        <begin position="236"/>
        <end position="238"/>
    </location>
</feature>
<feature type="strand" evidence="30">
    <location>
        <begin position="239"/>
        <end position="241"/>
    </location>
</feature>
<feature type="helix" evidence="28">
    <location>
        <begin position="242"/>
        <end position="246"/>
    </location>
</feature>
<feature type="helix" evidence="28">
    <location>
        <begin position="254"/>
        <end position="256"/>
    </location>
</feature>
<feature type="helix" evidence="28">
    <location>
        <begin position="260"/>
        <end position="274"/>
    </location>
</feature>
<feature type="helix" evidence="28">
    <location>
        <begin position="279"/>
        <end position="281"/>
    </location>
</feature>
<name>ST2A1_HUMAN</name>
<protein>
    <recommendedName>
        <fullName>Sulfotransferase 2A1</fullName>
        <shortName>ST2A1</shortName>
        <ecNumber evidence="4 5 7 8 9 10 11">2.8.2.2</ecNumber>
    </recommendedName>
    <alternativeName>
        <fullName>Bile salt sulfotransferase</fullName>
        <ecNumber evidence="6 8">2.8.2.14</ecNumber>
    </alternativeName>
    <alternativeName>
        <fullName evidence="13">Dehydroepiandrosterone sulfotransferase</fullName>
        <shortName evidence="13">DHEA-ST</shortName>
        <shortName evidence="13">DHEA-ST8</shortName>
    </alternativeName>
    <alternativeName>
        <fullName>Hydroxysteroid Sulfotransferase</fullName>
        <shortName>HST</shortName>
    </alternativeName>
    <alternativeName>
        <fullName>ST2</fullName>
    </alternativeName>
    <alternativeName>
        <fullName evidence="12">SULT2A3</fullName>
    </alternativeName>
</protein>
<reference key="1">
    <citation type="journal article" date="1993" name="Biochem. J.">
        <title>Cloning and expression of human liver dehydroepiandrosterone sulphotransferase.</title>
        <authorList>
            <person name="Comer K.A."/>
            <person name="Falany J.L."/>
            <person name="Falany C.N."/>
        </authorList>
    </citation>
    <scope>NUCLEOTIDE SEQUENCE [MRNA]</scope>
    <scope>PROTEIN SEQUENCE OF 61-65; 105-120 AND 274-285</scope>
    <scope>VARIANT PRO-63</scope>
    <scope>CATALYTIC ACTIVITY</scope>
    <scope>FUNCTION</scope>
    <source>
        <tissue>Liver</tissue>
    </source>
</reference>
<reference key="2">
    <citation type="journal article" date="1992" name="Mol. Pharmacol.">
        <title>Human liver dehydroepiandrosterone sulfotransferase: molecular cloning and expression of cDNA.</title>
        <authorList>
            <person name="Otterness D.M."/>
            <person name="Wieben E.D."/>
            <person name="Wood T.C."/>
            <person name="Watson R.W.G."/>
            <person name="Madden B.J."/>
            <person name="McCormick D.J."/>
            <person name="Weinshilboum R.M."/>
        </authorList>
    </citation>
    <scope>NUCLEOTIDE SEQUENCE [MRNA]</scope>
    <scope>PROTEIN SEQUENCE OF 81-108 AND 177-199</scope>
    <source>
        <tissue>Liver</tissue>
    </source>
</reference>
<reference key="3">
    <citation type="journal article" date="1995" name="Mol. Cell. Endocrinol.">
        <title>Human fetal adrenal hydroxysteroid sulphotransferase: cDNA cloning, stable expression in V79 cells and functional characterisation of the expressed enzyme.</title>
        <authorList>
            <person name="Forbes K.J."/>
            <person name="Hagen M."/>
            <person name="Coughtrie M.W.H."/>
            <person name="Glatt H.R."/>
            <person name="Hume R."/>
        </authorList>
    </citation>
    <scope>NUCLEOTIDE SEQUENCE [MRNA]</scope>
    <source>
        <tissue>Adrenal gland</tissue>
    </source>
</reference>
<reference key="4">
    <citation type="journal article" date="1995" name="DNA Cell Biol.">
        <title>Structural characterization and expression of the human dehydroepiandrosterone sulfotransferase gene.</title>
        <authorList>
            <person name="Luu-The V."/>
            <person name="Dufort I."/>
            <person name="Paquet N."/>
            <person name="Reimnitz G."/>
            <person name="Labrie F."/>
        </authorList>
    </citation>
    <scope>NUCLEOTIDE SEQUENCE [GENOMIC DNA]</scope>
</reference>
<reference key="5">
    <citation type="journal article" date="1995" name="DNA Cell Biol.">
        <title>Human dehydroepiandrosterone sulfotransferase gene: molecular cloning and structural characterization.</title>
        <authorList>
            <person name="Otterness D.M."/>
            <person name="Her C."/>
            <person name="Aksoy S."/>
            <person name="Kimura S."/>
            <person name="Wieben E.D."/>
            <person name="Weinshilboum R.M."/>
        </authorList>
    </citation>
    <scope>NUCLEOTIDE SEQUENCE [GENOMIC DNA]</scope>
</reference>
<reference key="6">
    <citation type="journal article" date="1992" name="Biochem. Biophys. Res. Commun.">
        <title>Molecular cloning of the alcohol/hydroxysteroid form (hSTa) of sulfotransferase from human liver.</title>
        <authorList>
            <person name="Kong A.-N.T."/>
            <person name="Yang L."/>
            <person name="Ma M."/>
            <person name="Tao D."/>
            <person name="Bjornsson T.D."/>
        </authorList>
    </citation>
    <scope>NUCLEOTIDE SEQUENCE [MRNA]</scope>
    <source>
        <tissue>Liver</tissue>
    </source>
</reference>
<reference key="7">
    <citation type="journal article" date="2004" name="Genome Res.">
        <title>The status, quality, and expansion of the NIH full-length cDNA project: the Mammalian Gene Collection (MGC).</title>
        <authorList>
            <consortium name="The MGC Project Team"/>
        </authorList>
    </citation>
    <scope>NUCLEOTIDE SEQUENCE [LARGE SCALE MRNA]</scope>
    <source>
        <tissue>Liver</tissue>
    </source>
</reference>
<reference key="8">
    <citation type="journal article" date="1990" name="Biochem. J.">
        <title>Human liver steroid sulphotransferase sulphates bile acids.</title>
        <authorList>
            <person name="Radominska A."/>
            <person name="Comer K.A."/>
            <person name="Zimniak P."/>
            <person name="Falany J."/>
            <person name="Iscan M."/>
            <person name="Falany C.N."/>
        </authorList>
    </citation>
    <scope>CATALYTIC ACTIVITY</scope>
    <scope>FUNCTION</scope>
    <scope>BIOPHYSICOCHEMICAL PROPERTIES</scope>
    <scope>SUBCELLULAR LOCATION</scope>
</reference>
<reference key="9">
    <citation type="journal article" date="1994" name="Mutagenesis">
        <title>Activation of benzylic alcohols to mutagens by human hepatic sulphotransferases.</title>
        <authorList>
            <person name="Glatt H."/>
            <person name="Seidel A."/>
            <person name="Harvey R.G."/>
            <person name="Coughtrie M.W."/>
        </authorList>
    </citation>
    <scope>CATALYTIC ACTIVITY</scope>
    <scope>FUNCTION</scope>
</reference>
<reference key="10">
    <citation type="journal article" date="2011" name="BMC Syst. Biol.">
        <title>Initial characterization of the human central proteome.</title>
        <authorList>
            <person name="Burkard T.R."/>
            <person name="Planyavsky M."/>
            <person name="Kaupe I."/>
            <person name="Breitwieser F.P."/>
            <person name="Buerckstuemmer T."/>
            <person name="Bennett K.L."/>
            <person name="Superti-Furga G."/>
            <person name="Colinge J."/>
        </authorList>
    </citation>
    <scope>IDENTIFICATION BY MASS SPECTROMETRY [LARGE SCALE ANALYSIS]</scope>
</reference>
<reference key="11">
    <citation type="journal article" date="2014" name="J. Proteomics">
        <title>An enzyme assisted RP-RPLC approach for in-depth analysis of human liver phosphoproteome.</title>
        <authorList>
            <person name="Bian Y."/>
            <person name="Song C."/>
            <person name="Cheng K."/>
            <person name="Dong M."/>
            <person name="Wang F."/>
            <person name="Huang J."/>
            <person name="Sun D."/>
            <person name="Wang L."/>
            <person name="Ye M."/>
            <person name="Zou H."/>
        </authorList>
    </citation>
    <scope>PHOSPHORYLATION [LARGE SCALE ANALYSIS] AT SER-251</scope>
    <scope>IDENTIFICATION BY MASS SPECTROMETRY [LARGE SCALE ANALYSIS]</scope>
    <source>
        <tissue>Liver</tissue>
    </source>
</reference>
<reference evidence="19" key="12">
    <citation type="journal article" date="2000" name="FEBS Lett.">
        <title>Crystal structure of SULT2A3, human hydroxysteroid sulfotransferase.</title>
        <authorList>
            <person name="Pedersen L.C."/>
            <person name="Petrotchenko E.V."/>
            <person name="Negishi M."/>
        </authorList>
    </citation>
    <scope>X-RAY CRYSTALLOGRAPHY (2.4 ANGSTROMS) IN COMPLEX WITH ADENOSINE-3'-5'-DIPHOSPHATE (PAP)</scope>
    <scope>SUBUNIT</scope>
</reference>
<reference evidence="20" key="13">
    <citation type="journal article" date="2002" name="Biochem. J.">
        <title>Crystal structure of human dehydroepiandrosterone sulphotransferase in complex with substrate.</title>
        <authorList>
            <person name="Rehse P.H."/>
            <person name="Zhou M."/>
            <person name="Lin S.X."/>
        </authorList>
    </citation>
    <scope>X-RAY CRYSTALLOGRAPHY (1.99 ANGSTROMS) IN COMPLEX WITH DEHYDROEPIANDROSTERONE (DHEA)</scope>
    <scope>ACTIVE SITE</scope>
</reference>
<reference evidence="21" key="14">
    <citation type="journal article" date="2004" name="J. Biol. Chem.">
        <title>Identifying androsterone (ADT) as a cognate substrate for human dehydroepiandrosterone sulfotransferase (DHEA-ST) important for steroid homeostasis: structure of the enzyme-ADT complex.</title>
        <authorList>
            <person name="Chang H.J."/>
            <person name="Shi R."/>
            <person name="Rehse P."/>
            <person name="Lin S.X."/>
        </authorList>
    </citation>
    <scope>X-RAY CRYSTALLOGRAPHY (2.7 ANGSTROMS) IN COMPLEX WITH ANDROSTERONE (ADT)</scope>
    <scope>CATALYTIC ACTIVITY</scope>
    <scope>FUNCTION</scope>
    <scope>ACTIVE SITE</scope>
</reference>
<reference evidence="22 23" key="15">
    <citation type="journal article" date="2008" name="Mol. Pharmacol.">
        <title>Identification and characterization of two amino acids critical for the substrate inhibition of human dehydroepiandrosterone sulfotransferase (SULT2A1).</title>
        <authorList>
            <person name="Lu L.Y."/>
            <person name="Hsieh Y.C."/>
            <person name="Liu M.Y."/>
            <person name="Lin Y.H."/>
            <person name="Chen C.J."/>
            <person name="Yang Y.S."/>
        </authorList>
    </citation>
    <scope>X-RAY CRYSTALLOGRAPHY (2.60 ANGSTROMS) IN COMPLEX WITH DEHYDROEPIANDROSTERONE (DHEA)</scope>
    <scope>MUTAGENESIS OF MET-137 AND TYR-238</scope>
    <scope>CATALYTIC ACTIVITY</scope>
    <scope>FUNCTION</scope>
    <scope>BIOPHYSICOCHEMICAL PROPERTIES</scope>
    <scope>ACTIVITY REGULATION</scope>
</reference>
<reference evidence="24" key="16">
    <citation type="submission" date="2008-10" db="PDB data bank">
        <title>rystal structure of human cytosolic sulfotransferase SULT2A1 in complex with PAP and lithocholic acid.</title>
        <authorList>
            <person name="Pan P.W."/>
            <person name="Dong A."/>
            <person name="Amaya M."/>
            <person name="Edwards A.M."/>
        </authorList>
    </citation>
    <scope>X-RAY CRYSTALLOGRAPHY (2.20 ANGSTROMS)</scope>
</reference>
<reference evidence="25" key="17">
    <citation type="submission" date="2012-12" db="PDB data bank">
        <title>Sulfotransferase Selectivity at the Molecular level.</title>
        <authorList>
            <person name="Kim J."/>
            <person name="Toro R."/>
            <person name="Bhosle R."/>
            <person name="Cook I."/>
            <person name="Wang T."/>
            <person name="Falany C.N."/>
            <person name="Leyh T.S."/>
            <person name="Almo S.C."/>
        </authorList>
    </citation>
    <scope>X-RAY CRYSTALLOGRAPHY (2.30 ANGSTROMS)</scope>
</reference>
<reference key="18">
    <citation type="journal article" date="2009" name="Drug Metab. Dispos.">
        <title>24-hydroxycholesterol sulfation by human cytosolic sulfotransferases: formation of monosulfates and disulfates, molecular modeling, sulfatase sensitivity, and inhibition of liver x receptor activation.</title>
        <authorList>
            <person name="Cook I.T."/>
            <person name="Duniec-Dmuchowski Z."/>
            <person name="Kocarek T.A."/>
            <person name="Runge-Morris M."/>
            <person name="Falany C.N."/>
        </authorList>
    </citation>
    <scope>CATALYTIC ACTIVITY</scope>
    <scope>FUNCTION</scope>
    <scope>BIOPHYSICOCHEMICAL PROPERTIES</scope>
</reference>
<reference key="19">
    <citation type="journal article" date="2011" name="Arch. Biochem. Biophys.">
        <title>Substrate inhibition in human hydroxysteroid sulfotransferase SULT2A1: studies on the formation of catalytically non-productive enzyme complexes.</title>
        <authorList>
            <person name="Gulcan H.O."/>
            <person name="Duffel M.W."/>
        </authorList>
    </citation>
    <scope>CATALYTIC ACTIVITY</scope>
    <scope>FUNCTION</scope>
</reference>
<reference key="20">
    <citation type="journal article" date="2018" name="Biochem. Cell Biol.">
        <title>Effects of genetic polymorphisms on the sulfation of dehydroepiandrosterone and pregnenolone by human cytosolic sulfotransferase SULT2A1.</title>
        <authorList>
            <person name="Abunnaja M.S."/>
            <person name="Alherz F.A."/>
            <person name="El Daibani A.A."/>
            <person name="Bairam A.F."/>
            <person name="Rasool M.I."/>
            <person name="Gohal S.A."/>
            <person name="Kurogi K."/>
            <person name="Suiko M."/>
            <person name="Sakakibara Y."/>
            <person name="Liu M.C."/>
        </authorList>
    </citation>
    <scope>CHARACTERIZATION OF VARIANTS GLU-44; THR-76; LYS-147; LYS-148; PRO-246; LEU-258 AND GLU-262</scope>
    <scope>CATALYTIC ACTIVITY</scope>
    <scope>BIOPHYSICOCHEMICAL PROPERTIES</scope>
    <scope>FUNCTION</scope>
</reference>
<dbReference type="EC" id="2.8.2.2" evidence="4 5 7 8 9 10 11"/>
<dbReference type="EC" id="2.8.2.14" evidence="6 8"/>
<dbReference type="EMBL" id="L20000">
    <property type="protein sequence ID" value="AAA35758.1"/>
    <property type="molecule type" value="mRNA"/>
</dbReference>
<dbReference type="EMBL" id="X70222">
    <property type="protein sequence ID" value="CAA49755.1"/>
    <property type="molecule type" value="mRNA"/>
</dbReference>
<dbReference type="EMBL" id="U08024">
    <property type="protein sequence ID" value="AAA17749.1"/>
    <property type="molecule type" value="mRNA"/>
</dbReference>
<dbReference type="EMBL" id="U08025">
    <property type="protein sequence ID" value="AAA17750.1"/>
    <property type="molecule type" value="mRNA"/>
</dbReference>
<dbReference type="EMBL" id="X84816">
    <property type="protein sequence ID" value="CAA59274.1"/>
    <property type="molecule type" value="mRNA"/>
</dbReference>
<dbReference type="EMBL" id="L36196">
    <property type="protein sequence ID" value="AAA75491.1"/>
    <property type="molecule type" value="Genomic_DNA"/>
</dbReference>
<dbReference type="EMBL" id="L36191">
    <property type="protein sequence ID" value="AAA75491.1"/>
    <property type="status" value="JOINED"/>
    <property type="molecule type" value="Genomic_DNA"/>
</dbReference>
<dbReference type="EMBL" id="L36192">
    <property type="protein sequence ID" value="AAA75491.1"/>
    <property type="status" value="JOINED"/>
    <property type="molecule type" value="Genomic_DNA"/>
</dbReference>
<dbReference type="EMBL" id="L36193">
    <property type="protein sequence ID" value="AAA75491.1"/>
    <property type="status" value="JOINED"/>
    <property type="molecule type" value="Genomic_DNA"/>
</dbReference>
<dbReference type="EMBL" id="L36194">
    <property type="protein sequence ID" value="AAA75491.1"/>
    <property type="status" value="JOINED"/>
    <property type="molecule type" value="Genomic_DNA"/>
</dbReference>
<dbReference type="EMBL" id="L36195">
    <property type="protein sequence ID" value="AAA75491.1"/>
    <property type="status" value="JOINED"/>
    <property type="molecule type" value="Genomic_DNA"/>
</dbReference>
<dbReference type="EMBL" id="U13061">
    <property type="protein sequence ID" value="AAC51353.1"/>
    <property type="molecule type" value="Genomic_DNA"/>
</dbReference>
<dbReference type="EMBL" id="U13056">
    <property type="protein sequence ID" value="AAC51353.1"/>
    <property type="status" value="JOINED"/>
    <property type="molecule type" value="Genomic_DNA"/>
</dbReference>
<dbReference type="EMBL" id="U13057">
    <property type="protein sequence ID" value="AAC51353.1"/>
    <property type="status" value="JOINED"/>
    <property type="molecule type" value="Genomic_DNA"/>
</dbReference>
<dbReference type="EMBL" id="U13058">
    <property type="protein sequence ID" value="AAC51353.1"/>
    <property type="status" value="JOINED"/>
    <property type="molecule type" value="Genomic_DNA"/>
</dbReference>
<dbReference type="EMBL" id="U13059">
    <property type="protein sequence ID" value="AAC51353.1"/>
    <property type="status" value="JOINED"/>
    <property type="molecule type" value="Genomic_DNA"/>
</dbReference>
<dbReference type="EMBL" id="U13060">
    <property type="protein sequence ID" value="AAC51353.1"/>
    <property type="status" value="JOINED"/>
    <property type="molecule type" value="Genomic_DNA"/>
</dbReference>
<dbReference type="EMBL" id="S43859">
    <property type="protein sequence ID" value="AAB23169.2"/>
    <property type="molecule type" value="mRNA"/>
</dbReference>
<dbReference type="EMBL" id="BC020755">
    <property type="protein sequence ID" value="AAH20755.1"/>
    <property type="molecule type" value="mRNA"/>
</dbReference>
<dbReference type="CCDS" id="CCDS12707.1"/>
<dbReference type="PIR" id="I53037">
    <property type="entry name" value="I38548"/>
</dbReference>
<dbReference type="RefSeq" id="NP_003158.2">
    <property type="nucleotide sequence ID" value="NM_003167.3"/>
</dbReference>
<dbReference type="PDB" id="1EFH">
    <property type="method" value="X-ray"/>
    <property type="resolution" value="2.40 A"/>
    <property type="chains" value="A/B=1-281"/>
</dbReference>
<dbReference type="PDB" id="1J99">
    <property type="method" value="X-ray"/>
    <property type="resolution" value="1.99 A"/>
    <property type="chains" value="A=2-285"/>
</dbReference>
<dbReference type="PDB" id="1OV4">
    <property type="method" value="X-ray"/>
    <property type="resolution" value="2.70 A"/>
    <property type="chains" value="A=2-285"/>
</dbReference>
<dbReference type="PDB" id="2QP3">
    <property type="method" value="X-ray"/>
    <property type="resolution" value="2.60 A"/>
    <property type="chains" value="A=2-285"/>
</dbReference>
<dbReference type="PDB" id="2QP4">
    <property type="method" value="X-ray"/>
    <property type="resolution" value="3.00 A"/>
    <property type="chains" value="A=2-285"/>
</dbReference>
<dbReference type="PDB" id="3F3Y">
    <property type="method" value="X-ray"/>
    <property type="resolution" value="2.20 A"/>
    <property type="chains" value="A/B/C/D=1-285"/>
</dbReference>
<dbReference type="PDB" id="4IFB">
    <property type="method" value="X-ray"/>
    <property type="resolution" value="2.30 A"/>
    <property type="chains" value="A/B=1-285"/>
</dbReference>
<dbReference type="PDBsum" id="1EFH"/>
<dbReference type="PDBsum" id="1J99"/>
<dbReference type="PDBsum" id="1OV4"/>
<dbReference type="PDBsum" id="2QP3"/>
<dbReference type="PDBsum" id="2QP4"/>
<dbReference type="PDBsum" id="3F3Y"/>
<dbReference type="PDBsum" id="4IFB"/>
<dbReference type="SMR" id="Q06520"/>
<dbReference type="BioGRID" id="112691">
    <property type="interactions" value="10"/>
</dbReference>
<dbReference type="FunCoup" id="Q06520">
    <property type="interactions" value="200"/>
</dbReference>
<dbReference type="IntAct" id="Q06520">
    <property type="interactions" value="6"/>
</dbReference>
<dbReference type="STRING" id="9606.ENSP00000222002"/>
<dbReference type="BindingDB" id="Q06520"/>
<dbReference type="ChEMBL" id="CHEMBL2077"/>
<dbReference type="DrugBank" id="DB05812">
    <property type="generic name" value="Abiraterone"/>
</dbReference>
<dbReference type="DrugBank" id="DB01812">
    <property type="generic name" value="Adenosine 3',5'-diphosphate"/>
</dbReference>
<dbReference type="DrugBank" id="DB02854">
    <property type="generic name" value="Aetiocholanolone"/>
</dbReference>
<dbReference type="DrugBank" id="DB12243">
    <property type="generic name" value="Edaravone"/>
</dbReference>
<dbReference type="DrugBank" id="DB12471">
    <property type="generic name" value="Ibrexafungerp"/>
</dbReference>
<dbReference type="DrugBank" id="DB04445">
    <property type="generic name" value="Mercuric iodide"/>
</dbReference>
<dbReference type="DrugBank" id="DB00968">
    <property type="generic name" value="Methyldopa"/>
</dbReference>
<dbReference type="DrugBank" id="DB09073">
    <property type="generic name" value="Palbociclib"/>
</dbReference>
<dbReference type="DrugBank" id="DB00960">
    <property type="generic name" value="Pindolol"/>
</dbReference>
<dbReference type="DrugBank" id="DB01708">
    <property type="generic name" value="Prasterone"/>
</dbReference>
<dbReference type="DrugBank" id="DB09288">
    <property type="generic name" value="Propacetamol"/>
</dbReference>
<dbReference type="DrugBank" id="DB00867">
    <property type="generic name" value="Ritodrine"/>
</dbReference>
<dbReference type="DrugBank" id="DB00675">
    <property type="generic name" value="Tamoxifen"/>
</dbReference>
<dbReference type="DrugBank" id="DB00871">
    <property type="generic name" value="Terbutaline"/>
</dbReference>
<dbReference type="SwissLipids" id="SLP:000001650"/>
<dbReference type="GlyGen" id="Q06520">
    <property type="glycosylation" value="1 site, 3 N-linked glycans (1 site)"/>
</dbReference>
<dbReference type="iPTMnet" id="Q06520"/>
<dbReference type="PhosphoSitePlus" id="Q06520"/>
<dbReference type="BioMuta" id="SULT2A1"/>
<dbReference type="DMDM" id="1711591"/>
<dbReference type="jPOST" id="Q06520"/>
<dbReference type="MassIVE" id="Q06520"/>
<dbReference type="PaxDb" id="9606-ENSP00000222002"/>
<dbReference type="PeptideAtlas" id="Q06520"/>
<dbReference type="ProteomicsDB" id="58456"/>
<dbReference type="Antibodypedia" id="4362">
    <property type="antibodies" value="505 antibodies from 39 providers"/>
</dbReference>
<dbReference type="DNASU" id="6822"/>
<dbReference type="Ensembl" id="ENST00000222002.4">
    <property type="protein sequence ID" value="ENSP00000222002.2"/>
    <property type="gene ID" value="ENSG00000105398.4"/>
</dbReference>
<dbReference type="GeneID" id="6822"/>
<dbReference type="KEGG" id="hsa:6822"/>
<dbReference type="MANE-Select" id="ENST00000222002.4">
    <property type="protein sequence ID" value="ENSP00000222002.2"/>
    <property type="RefSeq nucleotide sequence ID" value="NM_003167.4"/>
    <property type="RefSeq protein sequence ID" value="NP_003158.2"/>
</dbReference>
<dbReference type="UCSC" id="uc002phr.2">
    <property type="organism name" value="human"/>
</dbReference>
<dbReference type="AGR" id="HGNC:11458"/>
<dbReference type="CTD" id="6822"/>
<dbReference type="DisGeNET" id="6822"/>
<dbReference type="GeneCards" id="SULT2A1"/>
<dbReference type="HGNC" id="HGNC:11458">
    <property type="gene designation" value="SULT2A1"/>
</dbReference>
<dbReference type="HPA" id="ENSG00000105398">
    <property type="expression patterns" value="Tissue enriched (liver)"/>
</dbReference>
<dbReference type="MIM" id="125263">
    <property type="type" value="gene"/>
</dbReference>
<dbReference type="neXtProt" id="NX_Q06520"/>
<dbReference type="OpenTargets" id="ENSG00000105398"/>
<dbReference type="PharmGKB" id="PA346"/>
<dbReference type="VEuPathDB" id="HostDB:ENSG00000105398"/>
<dbReference type="eggNOG" id="KOG1584">
    <property type="taxonomic scope" value="Eukaryota"/>
</dbReference>
<dbReference type="GeneTree" id="ENSGT00940000154432"/>
<dbReference type="HOGENOM" id="CLU_027239_1_0_1"/>
<dbReference type="InParanoid" id="Q06520"/>
<dbReference type="OMA" id="CQGLSAY"/>
<dbReference type="OrthoDB" id="205623at2759"/>
<dbReference type="PAN-GO" id="Q06520">
    <property type="GO annotations" value="3 GO annotations based on evolutionary models"/>
</dbReference>
<dbReference type="PhylomeDB" id="Q06520"/>
<dbReference type="TreeFam" id="TF321745"/>
<dbReference type="BioCyc" id="MetaCyc:HS02732-MONOMER"/>
<dbReference type="PathwayCommons" id="Q06520"/>
<dbReference type="Reactome" id="R-HSA-156584">
    <property type="pathway name" value="Cytosolic sulfonation of small molecules"/>
</dbReference>
<dbReference type="Reactome" id="R-HSA-1989781">
    <property type="pathway name" value="PPARA activates gene expression"/>
</dbReference>
<dbReference type="Reactome" id="R-HSA-9753281">
    <property type="pathway name" value="Paracetamol ADME"/>
</dbReference>
<dbReference type="SABIO-RK" id="Q06520"/>
<dbReference type="SignaLink" id="Q06520"/>
<dbReference type="BioGRID-ORCS" id="6822">
    <property type="hits" value="6 hits in 1148 CRISPR screens"/>
</dbReference>
<dbReference type="ChiTaRS" id="SULT2A1">
    <property type="organism name" value="human"/>
</dbReference>
<dbReference type="EvolutionaryTrace" id="Q06520"/>
<dbReference type="GeneWiki" id="Bile_salt_sulfotransferase"/>
<dbReference type="GenomeRNAi" id="6822"/>
<dbReference type="Pharos" id="Q06520">
    <property type="development level" value="Tbio"/>
</dbReference>
<dbReference type="PRO" id="PR:Q06520"/>
<dbReference type="Proteomes" id="UP000005640">
    <property type="component" value="Chromosome 19"/>
</dbReference>
<dbReference type="RNAct" id="Q06520">
    <property type="molecule type" value="protein"/>
</dbReference>
<dbReference type="Bgee" id="ENSG00000105398">
    <property type="expression patterns" value="Expressed in adrenal tissue and 89 other cell types or tissues"/>
</dbReference>
<dbReference type="ExpressionAtlas" id="Q06520">
    <property type="expression patterns" value="baseline and differential"/>
</dbReference>
<dbReference type="GO" id="GO:0005737">
    <property type="term" value="C:cytoplasm"/>
    <property type="evidence" value="ECO:0000318"/>
    <property type="project" value="GO_Central"/>
</dbReference>
<dbReference type="GO" id="GO:0005829">
    <property type="term" value="C:cytosol"/>
    <property type="evidence" value="ECO:0000314"/>
    <property type="project" value="UniProtKB"/>
</dbReference>
<dbReference type="GO" id="GO:0050656">
    <property type="term" value="F:3'-phosphoadenosine 5'-phosphosulfate binding"/>
    <property type="evidence" value="ECO:0000314"/>
    <property type="project" value="UniProtKB"/>
</dbReference>
<dbReference type="GO" id="GO:0004027">
    <property type="term" value="F:alcohol sulfotransferase activity"/>
    <property type="evidence" value="ECO:0000314"/>
    <property type="project" value="UniProtKB"/>
</dbReference>
<dbReference type="GO" id="GO:0047704">
    <property type="term" value="F:bile-salt sulfotransferase activity"/>
    <property type="evidence" value="ECO:0000314"/>
    <property type="project" value="UniProtKB"/>
</dbReference>
<dbReference type="GO" id="GO:0050294">
    <property type="term" value="F:steroid sulfotransferase activity"/>
    <property type="evidence" value="ECO:0000314"/>
    <property type="project" value="CAFA"/>
</dbReference>
<dbReference type="GO" id="GO:0008146">
    <property type="term" value="F:sulfotransferase activity"/>
    <property type="evidence" value="ECO:0000314"/>
    <property type="project" value="MGI"/>
</dbReference>
<dbReference type="GO" id="GO:0050427">
    <property type="term" value="P:3'-phosphoadenosine 5'-phosphosulfate metabolic process"/>
    <property type="evidence" value="ECO:0000314"/>
    <property type="project" value="CAFA"/>
</dbReference>
<dbReference type="GO" id="GO:0030573">
    <property type="term" value="P:bile acid catabolic process"/>
    <property type="evidence" value="ECO:0007669"/>
    <property type="project" value="UniProtKB-KW"/>
</dbReference>
<dbReference type="GO" id="GO:0008203">
    <property type="term" value="P:cholesterol metabolic process"/>
    <property type="evidence" value="ECO:0000314"/>
    <property type="project" value="UniProtKB"/>
</dbReference>
<dbReference type="GO" id="GO:0006068">
    <property type="term" value="P:ethanol catabolic process"/>
    <property type="evidence" value="ECO:0000314"/>
    <property type="project" value="CAFA"/>
</dbReference>
<dbReference type="GO" id="GO:0016042">
    <property type="term" value="P:lipid catabolic process"/>
    <property type="evidence" value="ECO:0007669"/>
    <property type="project" value="UniProtKB-KW"/>
</dbReference>
<dbReference type="GO" id="GO:0008202">
    <property type="term" value="P:steroid metabolic process"/>
    <property type="evidence" value="ECO:0000314"/>
    <property type="project" value="GO_Central"/>
</dbReference>
<dbReference type="GO" id="GO:0051923">
    <property type="term" value="P:sulfation"/>
    <property type="evidence" value="ECO:0000314"/>
    <property type="project" value="MGI"/>
</dbReference>
<dbReference type="GO" id="GO:0042403">
    <property type="term" value="P:thyroid hormone metabolic process"/>
    <property type="evidence" value="ECO:0000314"/>
    <property type="project" value="UniProtKB"/>
</dbReference>
<dbReference type="GO" id="GO:0006805">
    <property type="term" value="P:xenobiotic metabolic process"/>
    <property type="evidence" value="ECO:0000314"/>
    <property type="project" value="UniProtKB"/>
</dbReference>
<dbReference type="FunFam" id="3.40.50.300:FF:000433">
    <property type="entry name" value="Estrogen sulfotransferase"/>
    <property type="match status" value="1"/>
</dbReference>
<dbReference type="Gene3D" id="3.40.50.300">
    <property type="entry name" value="P-loop containing nucleotide triphosphate hydrolases"/>
    <property type="match status" value="1"/>
</dbReference>
<dbReference type="InterPro" id="IPR027417">
    <property type="entry name" value="P-loop_NTPase"/>
</dbReference>
<dbReference type="InterPro" id="IPR000863">
    <property type="entry name" value="Sulfotransferase_dom"/>
</dbReference>
<dbReference type="PANTHER" id="PTHR11783">
    <property type="entry name" value="SULFOTRANSFERASE SULT"/>
    <property type="match status" value="1"/>
</dbReference>
<dbReference type="Pfam" id="PF00685">
    <property type="entry name" value="Sulfotransfer_1"/>
    <property type="match status" value="1"/>
</dbReference>
<dbReference type="SUPFAM" id="SSF52540">
    <property type="entry name" value="P-loop containing nucleoside triphosphate hydrolases"/>
    <property type="match status" value="1"/>
</dbReference>